<accession>Q9FTA2</accession>
<name>TCP21_ARATH</name>
<proteinExistence type="evidence at protein level"/>
<reference key="1">
    <citation type="journal article" date="2000" name="Nature">
        <title>Sequence and analysis of chromosome 5 of the plant Arabidopsis thaliana.</title>
        <authorList>
            <person name="Tabata S."/>
            <person name="Kaneko T."/>
            <person name="Nakamura Y."/>
            <person name="Kotani H."/>
            <person name="Kato T."/>
            <person name="Asamizu E."/>
            <person name="Miyajima N."/>
            <person name="Sasamoto S."/>
            <person name="Kimura T."/>
            <person name="Hosouchi T."/>
            <person name="Kawashima K."/>
            <person name="Kohara M."/>
            <person name="Matsumoto M."/>
            <person name="Matsuno A."/>
            <person name="Muraki A."/>
            <person name="Nakayama S."/>
            <person name="Nakazaki N."/>
            <person name="Naruo K."/>
            <person name="Okumura S."/>
            <person name="Shinpo S."/>
            <person name="Takeuchi C."/>
            <person name="Wada T."/>
            <person name="Watanabe A."/>
            <person name="Yamada M."/>
            <person name="Yasuda M."/>
            <person name="Sato S."/>
            <person name="de la Bastide M."/>
            <person name="Huang E."/>
            <person name="Spiegel L."/>
            <person name="Gnoj L."/>
            <person name="O'Shaughnessy A."/>
            <person name="Preston R."/>
            <person name="Habermann K."/>
            <person name="Murray J."/>
            <person name="Johnson D."/>
            <person name="Rohlfing T."/>
            <person name="Nelson J."/>
            <person name="Stoneking T."/>
            <person name="Pepin K."/>
            <person name="Spieth J."/>
            <person name="Sekhon M."/>
            <person name="Armstrong J."/>
            <person name="Becker M."/>
            <person name="Belter E."/>
            <person name="Cordum H."/>
            <person name="Cordes M."/>
            <person name="Courtney L."/>
            <person name="Courtney W."/>
            <person name="Dante M."/>
            <person name="Du H."/>
            <person name="Edwards J."/>
            <person name="Fryman J."/>
            <person name="Haakensen B."/>
            <person name="Lamar E."/>
            <person name="Latreille P."/>
            <person name="Leonard S."/>
            <person name="Meyer R."/>
            <person name="Mulvaney E."/>
            <person name="Ozersky P."/>
            <person name="Riley A."/>
            <person name="Strowmatt C."/>
            <person name="Wagner-McPherson C."/>
            <person name="Wollam A."/>
            <person name="Yoakum M."/>
            <person name="Bell M."/>
            <person name="Dedhia N."/>
            <person name="Parnell L."/>
            <person name="Shah R."/>
            <person name="Rodriguez M."/>
            <person name="Hoon See L."/>
            <person name="Vil D."/>
            <person name="Baker J."/>
            <person name="Kirchoff K."/>
            <person name="Toth K."/>
            <person name="King L."/>
            <person name="Bahret A."/>
            <person name="Miller B."/>
            <person name="Marra M.A."/>
            <person name="Martienssen R."/>
            <person name="McCombie W.R."/>
            <person name="Wilson R.K."/>
            <person name="Murphy G."/>
            <person name="Bancroft I."/>
            <person name="Volckaert G."/>
            <person name="Wambutt R."/>
            <person name="Duesterhoeft A."/>
            <person name="Stiekema W."/>
            <person name="Pohl T."/>
            <person name="Entian K.-D."/>
            <person name="Terryn N."/>
            <person name="Hartley N."/>
            <person name="Bent E."/>
            <person name="Johnson S."/>
            <person name="Langham S.-A."/>
            <person name="McCullagh B."/>
            <person name="Robben J."/>
            <person name="Grymonprez B."/>
            <person name="Zimmermann W."/>
            <person name="Ramsperger U."/>
            <person name="Wedler H."/>
            <person name="Balke K."/>
            <person name="Wedler E."/>
            <person name="Peters S."/>
            <person name="van Staveren M."/>
            <person name="Dirkse W."/>
            <person name="Mooijman P."/>
            <person name="Klein Lankhorst R."/>
            <person name="Weitzenegger T."/>
            <person name="Bothe G."/>
            <person name="Rose M."/>
            <person name="Hauf J."/>
            <person name="Berneiser S."/>
            <person name="Hempel S."/>
            <person name="Feldpausch M."/>
            <person name="Lamberth S."/>
            <person name="Villarroel R."/>
            <person name="Gielen J."/>
            <person name="Ardiles W."/>
            <person name="Bents O."/>
            <person name="Lemcke K."/>
            <person name="Kolesov G."/>
            <person name="Mayer K.F.X."/>
            <person name="Rudd S."/>
            <person name="Schoof H."/>
            <person name="Schueller C."/>
            <person name="Zaccaria P."/>
            <person name="Mewes H.-W."/>
            <person name="Bevan M."/>
            <person name="Fransz P.F."/>
        </authorList>
    </citation>
    <scope>NUCLEOTIDE SEQUENCE [LARGE SCALE GENOMIC DNA]</scope>
    <source>
        <strain>cv. Columbia</strain>
    </source>
</reference>
<reference key="2">
    <citation type="journal article" date="2017" name="Plant J.">
        <title>Araport11: a complete reannotation of the Arabidopsis thaliana reference genome.</title>
        <authorList>
            <person name="Cheng C.Y."/>
            <person name="Krishnakumar V."/>
            <person name="Chan A.P."/>
            <person name="Thibaud-Nissen F."/>
            <person name="Schobel S."/>
            <person name="Town C.D."/>
        </authorList>
    </citation>
    <scope>GENOME REANNOTATION</scope>
    <source>
        <strain>cv. Columbia</strain>
    </source>
</reference>
<reference key="3">
    <citation type="journal article" date="2003" name="Science">
        <title>Empirical analysis of transcriptional activity in the Arabidopsis genome.</title>
        <authorList>
            <person name="Yamada K."/>
            <person name="Lim J."/>
            <person name="Dale J.M."/>
            <person name="Chen H."/>
            <person name="Shinn P."/>
            <person name="Palm C.J."/>
            <person name="Southwick A.M."/>
            <person name="Wu H.C."/>
            <person name="Kim C.J."/>
            <person name="Nguyen M."/>
            <person name="Pham P.K."/>
            <person name="Cheuk R.F."/>
            <person name="Karlin-Newmann G."/>
            <person name="Liu S.X."/>
            <person name="Lam B."/>
            <person name="Sakano H."/>
            <person name="Wu T."/>
            <person name="Yu G."/>
            <person name="Miranda M."/>
            <person name="Quach H.L."/>
            <person name="Tripp M."/>
            <person name="Chang C.H."/>
            <person name="Lee J.M."/>
            <person name="Toriumi M.J."/>
            <person name="Chan M.M."/>
            <person name="Tang C.C."/>
            <person name="Onodera C.S."/>
            <person name="Deng J.M."/>
            <person name="Akiyama K."/>
            <person name="Ansari Y."/>
            <person name="Arakawa T."/>
            <person name="Banh J."/>
            <person name="Banno F."/>
            <person name="Bowser L."/>
            <person name="Brooks S.Y."/>
            <person name="Carninci P."/>
            <person name="Chao Q."/>
            <person name="Choy N."/>
            <person name="Enju A."/>
            <person name="Goldsmith A.D."/>
            <person name="Gurjal M."/>
            <person name="Hansen N.F."/>
            <person name="Hayashizaki Y."/>
            <person name="Johnson-Hopson C."/>
            <person name="Hsuan V.W."/>
            <person name="Iida K."/>
            <person name="Karnes M."/>
            <person name="Khan S."/>
            <person name="Koesema E."/>
            <person name="Ishida J."/>
            <person name="Jiang P.X."/>
            <person name="Jones T."/>
            <person name="Kawai J."/>
            <person name="Kamiya A."/>
            <person name="Meyers C."/>
            <person name="Nakajima M."/>
            <person name="Narusaka M."/>
            <person name="Seki M."/>
            <person name="Sakurai T."/>
            <person name="Satou M."/>
            <person name="Tamse R."/>
            <person name="Vaysberg M."/>
            <person name="Wallender E.K."/>
            <person name="Wong C."/>
            <person name="Yamamura Y."/>
            <person name="Yuan S."/>
            <person name="Shinozaki K."/>
            <person name="Davis R.W."/>
            <person name="Theologis A."/>
            <person name="Ecker J.R."/>
        </authorList>
    </citation>
    <scope>NUCLEOTIDE SEQUENCE [LARGE SCALE MRNA]</scope>
    <source>
        <strain>cv. Columbia</strain>
    </source>
</reference>
<reference key="4">
    <citation type="journal article" date="2007" name="Plant Cell">
        <title>Arabidopsis BRANCHED1 acts as an integrator of branching signals within axillary buds.</title>
        <authorList>
            <person name="Aguilar-Martinez J.A."/>
            <person name="Poza-Carrion C."/>
            <person name="Cubas P."/>
        </authorList>
    </citation>
    <scope>GENE FAMILY</scope>
    <scope>NOMENCLATURE</scope>
</reference>
<reference key="5">
    <citation type="journal article" date="2009" name="Science">
        <title>A functional genomics approach reveals CHE as a component of the Arabidopsis circadian clock.</title>
        <authorList>
            <person name="Pruneda-Paz J.L."/>
            <person name="Breton G."/>
            <person name="Para A."/>
            <person name="Kay S.A."/>
        </authorList>
    </citation>
    <scope>FUNCTION</scope>
    <scope>SUBCELLULAR LOCATION</scope>
    <scope>TISSUE SPECIFICITY</scope>
    <scope>INTERACTION WITH APRR1</scope>
    <scope>DISRUPTION PHENOTYPE</scope>
</reference>
<reference key="6">
    <citation type="journal article" date="2014" name="J. Genet. Genomics">
        <title>SPOROCYTELESS is a novel embryophyte-specific transcription repressor that interacts with TPL and TCP proteins in Arabidopsis.</title>
        <authorList>
            <person name="Chen G.H."/>
            <person name="Sun J.Y."/>
            <person name="Liu M."/>
            <person name="Liu J."/>
            <person name="Yang W.C."/>
        </authorList>
    </citation>
    <scope>INTERACTION WITH SPL</scope>
</reference>
<evidence type="ECO:0000255" key="1">
    <source>
        <dbReference type="PROSITE-ProRule" id="PRU00701"/>
    </source>
</evidence>
<evidence type="ECO:0000256" key="2">
    <source>
        <dbReference type="SAM" id="MobiDB-lite"/>
    </source>
</evidence>
<evidence type="ECO:0000269" key="3">
    <source>
    </source>
</evidence>
<evidence type="ECO:0000269" key="4">
    <source>
    </source>
</evidence>
<protein>
    <recommendedName>
        <fullName>Transcription factor TCP21</fullName>
    </recommendedName>
    <alternativeName>
        <fullName>Protein CCA1 HIKING EXPEDITION</fullName>
    </alternativeName>
    <alternativeName>
        <fullName>Protein CHE</fullName>
    </alternativeName>
</protein>
<keyword id="KW-0090">Biological rhythms</keyword>
<keyword id="KW-0238">DNA-binding</keyword>
<keyword id="KW-0539">Nucleus</keyword>
<keyword id="KW-1185">Reference proteome</keyword>
<keyword id="KW-0804">Transcription</keyword>
<keyword id="KW-0805">Transcription regulation</keyword>
<gene>
    <name type="primary">TCP21</name>
    <name type="synonym">CHE</name>
    <name type="ordered locus">At5g08330</name>
    <name type="ORF">F8L15.60</name>
</gene>
<feature type="chain" id="PRO_0000330795" description="Transcription factor TCP21">
    <location>
        <begin position="1"/>
        <end position="239"/>
    </location>
</feature>
<feature type="domain" description="TCP" evidence="1">
    <location>
        <begin position="31"/>
        <end position="85"/>
    </location>
</feature>
<feature type="region of interest" description="Disordered" evidence="2">
    <location>
        <begin position="1"/>
        <end position="39"/>
    </location>
</feature>
<feature type="compositionally biased region" description="Basic and acidic residues" evidence="2">
    <location>
        <begin position="30"/>
        <end position="39"/>
    </location>
</feature>
<organism>
    <name type="scientific">Arabidopsis thaliana</name>
    <name type="common">Mouse-ear cress</name>
    <dbReference type="NCBI Taxonomy" id="3702"/>
    <lineage>
        <taxon>Eukaryota</taxon>
        <taxon>Viridiplantae</taxon>
        <taxon>Streptophyta</taxon>
        <taxon>Embryophyta</taxon>
        <taxon>Tracheophyta</taxon>
        <taxon>Spermatophyta</taxon>
        <taxon>Magnoliopsida</taxon>
        <taxon>eudicotyledons</taxon>
        <taxon>Gunneridae</taxon>
        <taxon>Pentapetalae</taxon>
        <taxon>rosids</taxon>
        <taxon>malvids</taxon>
        <taxon>Brassicales</taxon>
        <taxon>Brassicaceae</taxon>
        <taxon>Camelineae</taxon>
        <taxon>Arabidopsis</taxon>
    </lineage>
</organism>
<comment type="function">
    <text evidence="3">Transcription factor involved in the regulation of the circadian clock. Acts as a repressor of CCA1 by binding to its promoter. No binding to the LHY promoter.</text>
</comment>
<comment type="subunit">
    <text evidence="3 4">Interacts (via N-terminus) with APRR1/TOC1 (PubMed:19286557). Interacts with SPL (PubMed:25527103).</text>
</comment>
<comment type="interaction">
    <interactant intactId="EBI-4426168">
        <id>Q9FTA2</id>
    </interactant>
    <interactant intactId="EBI-15193303">
        <id>Q9SLA1</id>
        <label>At2g25620</label>
    </interactant>
    <organismsDiffer>false</organismsDiffer>
    <experiments>3</experiments>
</comment>
<comment type="interaction">
    <interactant intactId="EBI-4426168">
        <id>Q9FTA2</id>
    </interactant>
    <interactant intactId="EBI-1803261">
        <id>Q8S307</id>
        <label>BZR1</label>
    </interactant>
    <organismsDiffer>false</organismsDiffer>
    <experiments>5</experiments>
</comment>
<comment type="interaction">
    <interactant intactId="EBI-4426168">
        <id>Q9FTA2</id>
    </interactant>
    <interactant intactId="EBI-966009">
        <id>O80340</id>
        <label>ERF4</label>
    </interactant>
    <organismsDiffer>false</organismsDiffer>
    <experiments>5</experiments>
</comment>
<comment type="interaction">
    <interactant intactId="EBI-4426168">
        <id>Q9FTA2</id>
    </interactant>
    <interactant intactId="EBI-2000137">
        <id>Q9MAI5</id>
        <label>ERF8</label>
    </interactant>
    <organismsDiffer>false</organismsDiffer>
    <experiments>3</experiments>
</comment>
<comment type="interaction">
    <interactant intactId="EBI-4426168">
        <id>Q9FTA2</id>
    </interactant>
    <interactant intactId="EBI-3946434">
        <id>Q38828</id>
        <label>IAA10</label>
    </interactant>
    <organismsDiffer>false</organismsDiffer>
    <experiments>3</experiments>
</comment>
<comment type="interaction">
    <interactant intactId="EBI-4426168">
        <id>Q9FTA2</id>
    </interactant>
    <interactant intactId="EBI-25524519">
        <id>A0A2H1ZEF6</id>
        <label>IAA15</label>
    </interactant>
    <organismsDiffer>false</organismsDiffer>
    <experiments>3</experiments>
</comment>
<comment type="interaction">
    <interactant intactId="EBI-4426168">
        <id>Q9FTA2</id>
    </interactant>
    <interactant intactId="EBI-632231">
        <id>O24407</id>
        <label>IAA16</label>
    </interactant>
    <organismsDiffer>false</organismsDiffer>
    <experiments>3</experiments>
</comment>
<comment type="interaction">
    <interactant intactId="EBI-4426168">
        <id>Q9FTA2</id>
    </interactant>
    <interactant intactId="EBI-632243">
        <id>P93830</id>
        <label>IAA17</label>
    </interactant>
    <organismsDiffer>false</organismsDiffer>
    <experiments>3</experiments>
</comment>
<comment type="interaction">
    <interactant intactId="EBI-4426168">
        <id>Q9FTA2</id>
    </interactant>
    <interactant intactId="EBI-632187">
        <id>P33077</id>
        <label>IAA4</label>
    </interactant>
    <organismsDiffer>false</organismsDiffer>
    <experiments>3</experiments>
</comment>
<comment type="interaction">
    <interactant intactId="EBI-4426168">
        <id>Q9FTA2</id>
    </interactant>
    <interactant intactId="EBI-541107">
        <id>Q9LUA3</id>
        <label>NIMIN-2</label>
    </interactant>
    <organismsDiffer>false</organismsDiffer>
    <experiments>3</experiments>
</comment>
<comment type="interaction">
    <interactant intactId="EBI-4426168">
        <id>Q9FTA2</id>
    </interactant>
    <interactant intactId="EBI-541115">
        <id>Q9FNZ4</id>
        <label>NIMIN-3</label>
    </interactant>
    <organismsDiffer>false</organismsDiffer>
    <experiments>3</experiments>
</comment>
<comment type="interaction">
    <interactant intactId="EBI-4426168">
        <id>Q9FTA2</id>
    </interactant>
    <interactant intactId="EBI-2349513">
        <id>Q84MC7</id>
        <label>PYL9</label>
    </interactant>
    <organismsDiffer>false</organismsDiffer>
    <experiments>3</experiments>
</comment>
<comment type="interaction">
    <interactant intactId="EBI-4426168">
        <id>Q9FTA2</id>
    </interactant>
    <interactant intactId="EBI-4424563">
        <id>Q93Z00</id>
        <label>TCP14</label>
    </interactant>
    <organismsDiffer>false</organismsDiffer>
    <experiments>3</experiments>
</comment>
<comment type="interaction">
    <interactant intactId="EBI-4426168">
        <id>Q9FTA2</id>
    </interactant>
    <interactant intactId="EBI-4426178">
        <id>Q9LT89</id>
        <label>TCP19</label>
    </interactant>
    <organismsDiffer>false</organismsDiffer>
    <experiments>3</experiments>
</comment>
<comment type="interaction">
    <interactant intactId="EBI-4426168">
        <id>Q9FTA2</id>
    </interactant>
    <interactant intactId="EBI-3134124">
        <id>Q9C518</id>
        <label>TCP8</label>
    </interactant>
    <organismsDiffer>false</organismsDiffer>
    <experiments>3</experiments>
</comment>
<comment type="interaction">
    <interactant intactId="EBI-4426168">
        <id>Q9FTA2</id>
    </interactant>
    <interactant intactId="EBI-9838721">
        <id>O64647</id>
        <label>TCP9</label>
    </interactant>
    <organismsDiffer>false</organismsDiffer>
    <experiments>3</experiments>
</comment>
<comment type="subcellular location">
    <subcellularLocation>
        <location evidence="1 3">Nucleus</location>
    </subcellularLocation>
</comment>
<comment type="tissue specificity">
    <text evidence="3">Expressed in leaves, roots, and stems.</text>
</comment>
<comment type="disruption phenotype">
    <text evidence="3">No effect on the period length or phase of the circadian clock.</text>
</comment>
<sequence>MADNDGAVSNGIIVEQTSNKGPLNAVKKPPSKDRHSKVDGRGRRIRMPIICAARVFQLTRELGHKSDGQTIEWLLRQAEPSIIAATGTGTTPASFSTASLSTSSPFTLGKRVVRAEEGESGGGGGGGLTVGHTMGTSLMGGGGSGGFWAVPARPDFGQVWSFATGAPPEMVFAQQQQPATLFVRHQQQQQASAAAAAAMGEASAARVGNYLPGHHLNLLASLSGGANGSGRREDDHEPR</sequence>
<dbReference type="EMBL" id="AL392174">
    <property type="protein sequence ID" value="CAC08333.1"/>
    <property type="molecule type" value="Genomic_DNA"/>
</dbReference>
<dbReference type="EMBL" id="CP002688">
    <property type="protein sequence ID" value="AED91284.1"/>
    <property type="molecule type" value="Genomic_DNA"/>
</dbReference>
<dbReference type="EMBL" id="AF412074">
    <property type="protein sequence ID" value="AAL06527.1"/>
    <property type="molecule type" value="mRNA"/>
</dbReference>
<dbReference type="EMBL" id="AY072620">
    <property type="protein sequence ID" value="AAL62011.1"/>
    <property type="molecule type" value="mRNA"/>
</dbReference>
<dbReference type="SMR" id="Q9FTA2"/>
<dbReference type="BioGRID" id="16008">
    <property type="interactions" value="130"/>
</dbReference>
<dbReference type="FunCoup" id="Q9FTA2">
    <property type="interactions" value="70"/>
</dbReference>
<dbReference type="IntAct" id="Q9FTA2">
    <property type="interactions" value="119"/>
</dbReference>
<dbReference type="STRING" id="3702.Q9FTA2"/>
<dbReference type="GlyGen" id="Q9FTA2">
    <property type="glycosylation" value="1 site"/>
</dbReference>
<dbReference type="PaxDb" id="3702-AT5G08330.1"/>
<dbReference type="ProteomicsDB" id="234202"/>
<dbReference type="EnsemblPlants" id="AT5G08330.1">
    <property type="protein sequence ID" value="AT5G08330.1"/>
    <property type="gene ID" value="AT5G08330"/>
</dbReference>
<dbReference type="GeneID" id="830730"/>
<dbReference type="Gramene" id="AT5G08330.1">
    <property type="protein sequence ID" value="AT5G08330.1"/>
    <property type="gene ID" value="AT5G08330"/>
</dbReference>
<dbReference type="KEGG" id="ath:AT5G08330"/>
<dbReference type="Araport" id="AT5G08330"/>
<dbReference type="TAIR" id="AT5G08330">
    <property type="gene designation" value="TCP21"/>
</dbReference>
<dbReference type="eggNOG" id="ENOG502QSSR">
    <property type="taxonomic scope" value="Eukaryota"/>
</dbReference>
<dbReference type="HOGENOM" id="CLU_100757_0_0_1"/>
<dbReference type="InParanoid" id="Q9FTA2"/>
<dbReference type="OMA" id="PVICAAR"/>
<dbReference type="OrthoDB" id="1911901at2759"/>
<dbReference type="PhylomeDB" id="Q9FTA2"/>
<dbReference type="PRO" id="PR:Q9FTA2"/>
<dbReference type="Proteomes" id="UP000006548">
    <property type="component" value="Chromosome 5"/>
</dbReference>
<dbReference type="ExpressionAtlas" id="Q9FTA2">
    <property type="expression patterns" value="baseline and differential"/>
</dbReference>
<dbReference type="GO" id="GO:0005634">
    <property type="term" value="C:nucleus"/>
    <property type="evidence" value="ECO:0000314"/>
    <property type="project" value="UniProtKB"/>
</dbReference>
<dbReference type="GO" id="GO:0003677">
    <property type="term" value="F:DNA binding"/>
    <property type="evidence" value="ECO:0007669"/>
    <property type="project" value="UniProtKB-KW"/>
</dbReference>
<dbReference type="GO" id="GO:0003700">
    <property type="term" value="F:DNA-binding transcription factor activity"/>
    <property type="evidence" value="ECO:0000314"/>
    <property type="project" value="UniProtKB"/>
</dbReference>
<dbReference type="GO" id="GO:0043433">
    <property type="term" value="P:negative regulation of DNA-binding transcription factor activity"/>
    <property type="evidence" value="ECO:0000315"/>
    <property type="project" value="UniProtKB"/>
</dbReference>
<dbReference type="GO" id="GO:0042753">
    <property type="term" value="P:positive regulation of circadian rhythm"/>
    <property type="evidence" value="ECO:0000315"/>
    <property type="project" value="TAIR"/>
</dbReference>
<dbReference type="GO" id="GO:0042752">
    <property type="term" value="P:regulation of circadian rhythm"/>
    <property type="evidence" value="ECO:0000315"/>
    <property type="project" value="UniProtKB"/>
</dbReference>
<dbReference type="GO" id="GO:0006355">
    <property type="term" value="P:regulation of DNA-templated transcription"/>
    <property type="evidence" value="ECO:0000304"/>
    <property type="project" value="TAIR"/>
</dbReference>
<dbReference type="GO" id="GO:0048511">
    <property type="term" value="P:rhythmic process"/>
    <property type="evidence" value="ECO:0007669"/>
    <property type="project" value="UniProtKB-KW"/>
</dbReference>
<dbReference type="InterPro" id="IPR017887">
    <property type="entry name" value="TF_TCP_subgr"/>
</dbReference>
<dbReference type="InterPro" id="IPR005333">
    <property type="entry name" value="Transcription_factor_TCP"/>
</dbReference>
<dbReference type="PANTHER" id="PTHR31072:SF239">
    <property type="entry name" value="TRANSCRIPTION FACTOR TCP21-RELATED"/>
    <property type="match status" value="1"/>
</dbReference>
<dbReference type="PANTHER" id="PTHR31072">
    <property type="entry name" value="TRANSCRIPTION FACTOR TCP4-RELATED"/>
    <property type="match status" value="1"/>
</dbReference>
<dbReference type="Pfam" id="PF03634">
    <property type="entry name" value="TCP"/>
    <property type="match status" value="1"/>
</dbReference>
<dbReference type="PROSITE" id="PS51369">
    <property type="entry name" value="TCP"/>
    <property type="match status" value="1"/>
</dbReference>